<sequence>MARAVGIDLGTTNSVVSVLEGGDPVVVANSEGSRTTPSIVAFARNGEVLVGQPAKNQAVTNVDRTVRSVKRHMGSDWSIEIDGKKYTAPEISARILMKLKRDAEAYLGEDITDAVITTPAYFNDAQRQATKDAGQIAGLNVLRIVNEPTAAALAYGLDKGEKEQRILVFDLGGGTFDVSLLEIGEGVVEVRATSGDNHLGGDDWDQRVVDWLVDKFKGTSGIDLTKDKMAMQRLREAAEKAKIELSSSQSTSINLPYITVDADKNPLFLDEQLTRAEFQRITQDLLDRTRKPFQSVIADTGISVSEIDHVVLVGGSTRMPAVTDLVKELTGGKEPNKGVNPDEVVAVGAALQAGVLKGEVKDVLLLDVTPLSLGIETKGGVMTRLIERNTTIPTKRSETFTTADDNQPSVQIQVYQGEREIAAHNKLLGSFELTGIPPAPRGIPQIEVTFDIDANGIVHVTAKDKGTGKENTIRIQEGSGLSKEDIDRMIKDAEAHAEEDRKRREEADVRNQAETLVYQTEKFVKEQREAEGGSKVPEDTLNKVDAAVAEAKAALGGSDISAIKSAMEKLGQESQALGQAIYEAAQAASQATGAAHPGGEPGGAHPGSADDVVDAEVVDDGREAK</sequence>
<gene>
    <name type="primary">dnaK</name>
    <name type="ordered locus">Rv0350</name>
    <name type="ORF">MTCY13E10.10</name>
</gene>
<reference key="1">
    <citation type="submission" date="1991-02" db="EMBL/GenBank/DDBJ databases">
        <authorList>
            <person name="Lathigra R."/>
            <person name="Alexander B."/>
            <person name="Stover C.K."/>
            <person name="Coadwell J."/>
            <person name="Young R.A."/>
            <person name="Young D.B."/>
        </authorList>
    </citation>
    <scope>NUCLEOTIDE SEQUENCE [GENOMIC DNA]</scope>
    <source>
        <strain>ATCC 35801 / TMC 107 / Erdman</strain>
    </source>
</reference>
<reference key="2">
    <citation type="submission" date="2012-05" db="EMBL/GenBank/DDBJ databases">
        <authorList>
            <person name="Dhakal J."/>
            <person name="Agrawal R.K."/>
            <person name="Brah G.S."/>
            <person name="Ramneek V."/>
            <person name="Pawar H.N."/>
            <person name="Kaur D."/>
            <person name="Minhas P."/>
            <person name="Mothwal U."/>
            <person name="Saini N."/>
            <person name="Mahajan K."/>
        </authorList>
    </citation>
    <scope>NUCLEOTIDE SEQUENCE [GENOMIC DNA]</scope>
    <source>
        <strain>MTCC300</strain>
    </source>
</reference>
<reference key="3">
    <citation type="journal article" date="1998" name="Nature">
        <title>Deciphering the biology of Mycobacterium tuberculosis from the complete genome sequence.</title>
        <authorList>
            <person name="Cole S.T."/>
            <person name="Brosch R."/>
            <person name="Parkhill J."/>
            <person name="Garnier T."/>
            <person name="Churcher C.M."/>
            <person name="Harris D.E."/>
            <person name="Gordon S.V."/>
            <person name="Eiglmeier K."/>
            <person name="Gas S."/>
            <person name="Barry C.E. III"/>
            <person name="Tekaia F."/>
            <person name="Badcock K."/>
            <person name="Basham D."/>
            <person name="Brown D."/>
            <person name="Chillingworth T."/>
            <person name="Connor R."/>
            <person name="Davies R.M."/>
            <person name="Devlin K."/>
            <person name="Feltwell T."/>
            <person name="Gentles S."/>
            <person name="Hamlin N."/>
            <person name="Holroyd S."/>
            <person name="Hornsby T."/>
            <person name="Jagels K."/>
            <person name="Krogh A."/>
            <person name="McLean J."/>
            <person name="Moule S."/>
            <person name="Murphy L.D."/>
            <person name="Oliver S."/>
            <person name="Osborne J."/>
            <person name="Quail M.A."/>
            <person name="Rajandream M.A."/>
            <person name="Rogers J."/>
            <person name="Rutter S."/>
            <person name="Seeger K."/>
            <person name="Skelton S."/>
            <person name="Squares S."/>
            <person name="Squares R."/>
            <person name="Sulston J.E."/>
            <person name="Taylor K."/>
            <person name="Whitehead S."/>
            <person name="Barrell B.G."/>
        </authorList>
    </citation>
    <scope>NUCLEOTIDE SEQUENCE [LARGE SCALE GENOMIC DNA]</scope>
    <source>
        <strain>ATCC 25618 / H37Rv</strain>
    </source>
</reference>
<reference key="4">
    <citation type="journal article" date="2001" name="J. Bacteriol.">
        <title>The alternative sigma factor SigH regulates major components of oxidative and heat stress responses in Mycobacterium tuberculosis.</title>
        <authorList>
            <person name="Raman S."/>
            <person name="Song T."/>
            <person name="Puyang X."/>
            <person name="Bardarov S."/>
            <person name="Jacobs W.R. Jr."/>
            <person name="Husson R.N."/>
        </authorList>
    </citation>
    <scope>INDUCTION BY SIGH</scope>
    <source>
        <strain>ATCC 25618 / H37Rv</strain>
    </source>
</reference>
<reference key="5">
    <citation type="journal article" date="2005" name="J. Biol. Chem.">
        <title>Mycobacterium tuberculosis heat shock proteins use diverse Toll-like receptor pathways to activate pro-inflammatory signals.</title>
        <authorList>
            <person name="Bulut Y."/>
            <person name="Michelsen K.S."/>
            <person name="Hayrapetian L."/>
            <person name="Naiki Y."/>
            <person name="Spallek R."/>
            <person name="Singh M."/>
            <person name="Arditi M."/>
        </authorList>
    </citation>
    <scope>FUNCTION IN INFECTION</scope>
</reference>
<reference key="6">
    <citation type="journal article" date="2009" name="Infect. Immun.">
        <title>Mycobacterium tuberculosis Cpn60.2 and DnaK are located on the bacterial surface, where Cpn60.2 facilitates efficient bacterial association with macrophages.</title>
        <authorList>
            <person name="Hickey T.B."/>
            <person name="Thorson L.M."/>
            <person name="Speert D.P."/>
            <person name="Daffe M."/>
            <person name="Stokes R.W."/>
        </authorList>
    </citation>
    <scope>SUBCELLULAR LOCATION</scope>
    <source>
        <strain>ATCC 35801 / TMC 107 / Erdman</strain>
    </source>
</reference>
<reference key="7">
    <citation type="journal article" date="2011" name="J. Clin. Invest.">
        <title>Mycobacteria release active membrane vesicles that modulate immune responses in a TLR2-dependent manner in mice.</title>
        <authorList>
            <person name="Prados-Rosales R."/>
            <person name="Baena A."/>
            <person name="Martinez L.R."/>
            <person name="Luque-Garcia J."/>
            <person name="Kalscheuer R."/>
            <person name="Veeraraghavan U."/>
            <person name="Camara C."/>
            <person name="Nosanchuk J.D."/>
            <person name="Besra G.S."/>
            <person name="Chen B."/>
            <person name="Jimenez J."/>
            <person name="Glatman-Freedman A."/>
            <person name="Jacobs W.R. Jr."/>
            <person name="Porcelli S.A."/>
            <person name="Casadevall A."/>
        </authorList>
    </citation>
    <scope>SUBCELLULAR LOCATION</scope>
    <source>
        <strain>H37Rv</strain>
    </source>
</reference>
<reference key="8">
    <citation type="journal article" date="2011" name="Mol. Cell. Proteomics">
        <title>Proteogenomic analysis of Mycobacterium tuberculosis by high resolution mass spectrometry.</title>
        <authorList>
            <person name="Kelkar D.S."/>
            <person name="Kumar D."/>
            <person name="Kumar P."/>
            <person name="Balakrishnan L."/>
            <person name="Muthusamy B."/>
            <person name="Yadav A.K."/>
            <person name="Shrivastava P."/>
            <person name="Marimuthu A."/>
            <person name="Anand S."/>
            <person name="Sundaram H."/>
            <person name="Kingsbury R."/>
            <person name="Harsha H.C."/>
            <person name="Nair B."/>
            <person name="Prasad T.S."/>
            <person name="Chauhan D.S."/>
            <person name="Katoch K."/>
            <person name="Katoch V.M."/>
            <person name="Kumar P."/>
            <person name="Chaerkady R."/>
            <person name="Ramachandran S."/>
            <person name="Dash D."/>
            <person name="Pandey A."/>
        </authorList>
    </citation>
    <scope>IDENTIFICATION BY MASS SPECTROMETRY [LARGE SCALE ANALYSIS]</scope>
    <source>
        <strain>ATCC 25618 / H37Rv</strain>
    </source>
</reference>
<organism>
    <name type="scientific">Mycobacterium tuberculosis (strain ATCC 25618 / H37Rv)</name>
    <dbReference type="NCBI Taxonomy" id="83332"/>
    <lineage>
        <taxon>Bacteria</taxon>
        <taxon>Bacillati</taxon>
        <taxon>Actinomycetota</taxon>
        <taxon>Actinomycetes</taxon>
        <taxon>Mycobacteriales</taxon>
        <taxon>Mycobacteriaceae</taxon>
        <taxon>Mycobacterium</taxon>
        <taxon>Mycobacterium tuberculosis complex</taxon>
    </lineage>
</organism>
<name>DNAK_MYCTU</name>
<protein>
    <recommendedName>
        <fullName>Chaperone protein DnaK</fullName>
    </recommendedName>
    <alternativeName>
        <fullName>HSP70</fullName>
    </alternativeName>
    <alternativeName>
        <fullName>Heat shock 70 kDa protein</fullName>
    </alternativeName>
    <alternativeName>
        <fullName>Heat shock protein 70</fullName>
    </alternativeName>
</protein>
<comment type="function">
    <text evidence="2">Acts as a chaperone.</text>
</comment>
<comment type="function">
    <text evidence="5">Recombinant extracellular protein activates expression of NF-kappa-B in immortalized human dermal endothelial cells in a TLR2- and TLR4-dependent manner. Activation occurs via MYD88-dependent and -independent pathways and requires TIRAP, TRIF and TRAM (some experiments done in mouse cells, mice do not usually catch tuberculosis) (PubMed:15809303).</text>
</comment>
<comment type="subcellular location">
    <subcellularLocation>
        <location evidence="8">Cytoplasm</location>
    </subcellularLocation>
    <subcellularLocation>
        <location evidence="6">Secreted</location>
        <location evidence="6">Capsule</location>
    </subcellularLocation>
    <subcellularLocation>
        <location evidence="6">Cell surface</location>
    </subcellularLocation>
    <subcellularLocation>
        <location evidence="7">Extracellular vesicle</location>
        <location evidence="7">Bacterial extracellular vesicle</location>
    </subcellularLocation>
    <text evidence="6 7">Although thought of as a cytoplasmic chaperone this protein is routinely found extracellularly in the absence of cell lysis (PubMed:19470749). Present in extracytoplasmic vesicles (PubMed:21364279).</text>
</comment>
<comment type="induction">
    <text evidence="4">By stress conditions e.g. heat shock and oxidative stress under control of SigH. There is another promoter.</text>
</comment>
<comment type="similarity">
    <text evidence="8">Belongs to the heat shock protein 70 family.</text>
</comment>
<comment type="sequence caution" evidence="8">
    <conflict type="frameshift">
        <sequence resource="EMBL-CDS" id="CAA41306"/>
    </conflict>
</comment>
<feature type="chain" id="PRO_0000078499" description="Chaperone protein DnaK">
    <location>
        <begin position="1"/>
        <end position="625"/>
    </location>
</feature>
<feature type="region of interest" description="Disordered" evidence="3">
    <location>
        <begin position="586"/>
        <end position="625"/>
    </location>
</feature>
<feature type="compositionally biased region" description="Low complexity" evidence="3">
    <location>
        <begin position="586"/>
        <end position="598"/>
    </location>
</feature>
<feature type="modified residue" description="Phosphothreonine; by autocatalysis" evidence="1">
    <location>
        <position position="175"/>
    </location>
</feature>
<feature type="sequence conflict" description="In Ref. 1; CAA41306." evidence="8" ref="1">
    <original>LA</original>
    <variation>PG</variation>
    <location>
        <begin position="153"/>
        <end position="154"/>
    </location>
</feature>
<accession>P9WMJ9</accession>
<accession>I6QM76</accession>
<accession>O06301</accession>
<accession>P0A5B9</accession>
<accession>P32723</accession>
<evidence type="ECO:0000250" key="1"/>
<evidence type="ECO:0000255" key="2">
    <source>
        <dbReference type="HAMAP-Rule" id="MF_00332"/>
    </source>
</evidence>
<evidence type="ECO:0000256" key="3">
    <source>
        <dbReference type="SAM" id="MobiDB-lite"/>
    </source>
</evidence>
<evidence type="ECO:0000269" key="4">
    <source>
    </source>
</evidence>
<evidence type="ECO:0000269" key="5">
    <source>
    </source>
</evidence>
<evidence type="ECO:0000269" key="6">
    <source>
    </source>
</evidence>
<evidence type="ECO:0000269" key="7">
    <source>
    </source>
</evidence>
<evidence type="ECO:0000305" key="8"/>
<dbReference type="EMBL" id="X58406">
    <property type="protein sequence ID" value="CAA41306.1"/>
    <property type="status" value="ALT_FRAME"/>
    <property type="molecule type" value="Genomic_DNA"/>
</dbReference>
<dbReference type="EMBL" id="JX026662">
    <property type="protein sequence ID" value="AFM37299.1"/>
    <property type="molecule type" value="Genomic_DNA"/>
</dbReference>
<dbReference type="EMBL" id="AL123456">
    <property type="protein sequence ID" value="CCP43080.1"/>
    <property type="molecule type" value="Genomic_DNA"/>
</dbReference>
<dbReference type="PIR" id="G70574">
    <property type="entry name" value="G70574"/>
</dbReference>
<dbReference type="RefSeq" id="NP_214864.1">
    <property type="nucleotide sequence ID" value="NC_000962.3"/>
</dbReference>
<dbReference type="RefSeq" id="WP_003401814.1">
    <property type="nucleotide sequence ID" value="NZ_NVQJ01000002.1"/>
</dbReference>
<dbReference type="PDB" id="6W6E">
    <property type="method" value="EM"/>
    <property type="resolution" value="3.70 A"/>
    <property type="chains" value="I=1-625"/>
</dbReference>
<dbReference type="PDB" id="7L6N">
    <property type="method" value="EM"/>
    <property type="resolution" value="7.00 A"/>
    <property type="chains" value="I/J/K=1-625"/>
</dbReference>
<dbReference type="PDB" id="7O00">
    <property type="method" value="X-ray"/>
    <property type="resolution" value="2.24 A"/>
    <property type="chains" value="CCC=290-303"/>
</dbReference>
<dbReference type="PDB" id="8GB3">
    <property type="method" value="EM"/>
    <property type="resolution" value="3.70 A"/>
    <property type="chains" value="D=1-625"/>
</dbReference>
<dbReference type="PDBsum" id="6W6E"/>
<dbReference type="PDBsum" id="7L6N"/>
<dbReference type="PDBsum" id="7O00"/>
<dbReference type="PDBsum" id="8GB3"/>
<dbReference type="SMR" id="P9WMJ9"/>
<dbReference type="FunCoup" id="P9WMJ9">
    <property type="interactions" value="448"/>
</dbReference>
<dbReference type="IntAct" id="P9WMJ9">
    <property type="interactions" value="1"/>
</dbReference>
<dbReference type="STRING" id="83332.Rv0350"/>
<dbReference type="MoonProt" id="P9WMJ9"/>
<dbReference type="PaxDb" id="83332-Rv0350"/>
<dbReference type="DNASU" id="885946"/>
<dbReference type="GeneID" id="45424316"/>
<dbReference type="GeneID" id="885946"/>
<dbReference type="KEGG" id="mtu:Rv0350"/>
<dbReference type="KEGG" id="mtv:RVBD_0350"/>
<dbReference type="TubercuList" id="Rv0350"/>
<dbReference type="eggNOG" id="COG0443">
    <property type="taxonomic scope" value="Bacteria"/>
</dbReference>
<dbReference type="InParanoid" id="P9WMJ9"/>
<dbReference type="OrthoDB" id="9766019at2"/>
<dbReference type="PhylomeDB" id="P9WMJ9"/>
<dbReference type="Proteomes" id="UP000001584">
    <property type="component" value="Chromosome"/>
</dbReference>
<dbReference type="GO" id="GO:0097691">
    <property type="term" value="C:bacterial extracellular vesicle"/>
    <property type="evidence" value="ECO:0000314"/>
    <property type="project" value="UniProtKB"/>
</dbReference>
<dbReference type="GO" id="GO:0042603">
    <property type="term" value="C:capsule"/>
    <property type="evidence" value="ECO:0000314"/>
    <property type="project" value="CAFA"/>
</dbReference>
<dbReference type="GO" id="GO:0009986">
    <property type="term" value="C:cell surface"/>
    <property type="evidence" value="ECO:0007669"/>
    <property type="project" value="UniProtKB-SubCell"/>
</dbReference>
<dbReference type="GO" id="GO:0005829">
    <property type="term" value="C:cytosol"/>
    <property type="evidence" value="ECO:0007005"/>
    <property type="project" value="MTBBASE"/>
</dbReference>
<dbReference type="GO" id="GO:0005576">
    <property type="term" value="C:extracellular region"/>
    <property type="evidence" value="ECO:0000314"/>
    <property type="project" value="CAFA"/>
</dbReference>
<dbReference type="GO" id="GO:0009274">
    <property type="term" value="C:peptidoglycan-based cell wall"/>
    <property type="evidence" value="ECO:0000314"/>
    <property type="project" value="MTBBASE"/>
</dbReference>
<dbReference type="GO" id="GO:0005886">
    <property type="term" value="C:plasma membrane"/>
    <property type="evidence" value="ECO:0007005"/>
    <property type="project" value="MTBBASE"/>
</dbReference>
<dbReference type="GO" id="GO:0005524">
    <property type="term" value="F:ATP binding"/>
    <property type="evidence" value="ECO:0007669"/>
    <property type="project" value="UniProtKB-UniRule"/>
</dbReference>
<dbReference type="GO" id="GO:0016887">
    <property type="term" value="F:ATP hydrolysis activity"/>
    <property type="evidence" value="ECO:0000318"/>
    <property type="project" value="GO_Central"/>
</dbReference>
<dbReference type="GO" id="GO:0140662">
    <property type="term" value="F:ATP-dependent protein folding chaperone"/>
    <property type="evidence" value="ECO:0007669"/>
    <property type="project" value="InterPro"/>
</dbReference>
<dbReference type="GO" id="GO:0001968">
    <property type="term" value="F:fibronectin binding"/>
    <property type="evidence" value="ECO:0000353"/>
    <property type="project" value="CAFA"/>
</dbReference>
<dbReference type="GO" id="GO:0031072">
    <property type="term" value="F:heat shock protein binding"/>
    <property type="evidence" value="ECO:0000318"/>
    <property type="project" value="GO_Central"/>
</dbReference>
<dbReference type="GO" id="GO:0044183">
    <property type="term" value="F:protein folding chaperone"/>
    <property type="evidence" value="ECO:0000318"/>
    <property type="project" value="GO_Central"/>
</dbReference>
<dbReference type="GO" id="GO:0051082">
    <property type="term" value="F:unfolded protein binding"/>
    <property type="evidence" value="ECO:0007669"/>
    <property type="project" value="InterPro"/>
</dbReference>
<dbReference type="GO" id="GO:0035375">
    <property type="term" value="F:zymogen binding"/>
    <property type="evidence" value="ECO:0000353"/>
    <property type="project" value="CAFA"/>
</dbReference>
<dbReference type="GO" id="GO:0071451">
    <property type="term" value="P:cellular response to superoxide"/>
    <property type="evidence" value="ECO:0000270"/>
    <property type="project" value="MTBBASE"/>
</dbReference>
<dbReference type="GO" id="GO:0051085">
    <property type="term" value="P:chaperone cofactor-dependent protein refolding"/>
    <property type="evidence" value="ECO:0000318"/>
    <property type="project" value="GO_Central"/>
</dbReference>
<dbReference type="GO" id="GO:0061077">
    <property type="term" value="P:chaperone-mediated protein folding"/>
    <property type="evidence" value="ECO:0000314"/>
    <property type="project" value="UniProtKB"/>
</dbReference>
<dbReference type="GO" id="GO:0010756">
    <property type="term" value="P:positive regulation of plasminogen activation"/>
    <property type="evidence" value="ECO:0000314"/>
    <property type="project" value="CAFA"/>
</dbReference>
<dbReference type="GO" id="GO:0042026">
    <property type="term" value="P:protein refolding"/>
    <property type="evidence" value="ECO:0000318"/>
    <property type="project" value="GO_Central"/>
</dbReference>
<dbReference type="GO" id="GO:0046677">
    <property type="term" value="P:response to antibiotic"/>
    <property type="evidence" value="ECO:0000270"/>
    <property type="project" value="MTBBASE"/>
</dbReference>
<dbReference type="GO" id="GO:0046688">
    <property type="term" value="P:response to copper ion"/>
    <property type="evidence" value="ECO:0000270"/>
    <property type="project" value="MTBBASE"/>
</dbReference>
<dbReference type="GO" id="GO:0009408">
    <property type="term" value="P:response to heat"/>
    <property type="evidence" value="ECO:0000270"/>
    <property type="project" value="MTBBASE"/>
</dbReference>
<dbReference type="CDD" id="cd10234">
    <property type="entry name" value="ASKHA_NBD_HSP70_DnaK-like"/>
    <property type="match status" value="1"/>
</dbReference>
<dbReference type="FunFam" id="2.60.34.10:FF:000014">
    <property type="entry name" value="Chaperone protein DnaK HSP70"/>
    <property type="match status" value="1"/>
</dbReference>
<dbReference type="FunFam" id="1.20.1270.10:FF:000001">
    <property type="entry name" value="Molecular chaperone DnaK"/>
    <property type="match status" value="1"/>
</dbReference>
<dbReference type="FunFam" id="3.30.420.40:FF:000071">
    <property type="entry name" value="Molecular chaperone DnaK"/>
    <property type="match status" value="1"/>
</dbReference>
<dbReference type="FunFam" id="3.90.640.10:FF:000003">
    <property type="entry name" value="Molecular chaperone DnaK"/>
    <property type="match status" value="1"/>
</dbReference>
<dbReference type="Gene3D" id="1.20.1270.10">
    <property type="match status" value="1"/>
</dbReference>
<dbReference type="Gene3D" id="3.30.420.40">
    <property type="match status" value="2"/>
</dbReference>
<dbReference type="Gene3D" id="3.90.640.10">
    <property type="entry name" value="Actin, Chain A, domain 4"/>
    <property type="match status" value="1"/>
</dbReference>
<dbReference type="Gene3D" id="2.60.34.10">
    <property type="entry name" value="Substrate Binding Domain Of DNAk, Chain A, domain 1"/>
    <property type="match status" value="1"/>
</dbReference>
<dbReference type="HAMAP" id="MF_00332">
    <property type="entry name" value="DnaK"/>
    <property type="match status" value="1"/>
</dbReference>
<dbReference type="InterPro" id="IPR043129">
    <property type="entry name" value="ATPase_NBD"/>
</dbReference>
<dbReference type="InterPro" id="IPR012725">
    <property type="entry name" value="Chaperone_DnaK"/>
</dbReference>
<dbReference type="InterPro" id="IPR018181">
    <property type="entry name" value="Heat_shock_70_CS"/>
</dbReference>
<dbReference type="InterPro" id="IPR029048">
    <property type="entry name" value="HSP70_C_sf"/>
</dbReference>
<dbReference type="InterPro" id="IPR029047">
    <property type="entry name" value="HSP70_peptide-bd_sf"/>
</dbReference>
<dbReference type="InterPro" id="IPR013126">
    <property type="entry name" value="Hsp_70_fam"/>
</dbReference>
<dbReference type="NCBIfam" id="NF001413">
    <property type="entry name" value="PRK00290.1"/>
    <property type="match status" value="1"/>
</dbReference>
<dbReference type="NCBIfam" id="TIGR02350">
    <property type="entry name" value="prok_dnaK"/>
    <property type="match status" value="1"/>
</dbReference>
<dbReference type="PANTHER" id="PTHR19375">
    <property type="entry name" value="HEAT SHOCK PROTEIN 70KDA"/>
    <property type="match status" value="1"/>
</dbReference>
<dbReference type="Pfam" id="PF00012">
    <property type="entry name" value="HSP70"/>
    <property type="match status" value="1"/>
</dbReference>
<dbReference type="PRINTS" id="PR00301">
    <property type="entry name" value="HEATSHOCK70"/>
</dbReference>
<dbReference type="SUPFAM" id="SSF53067">
    <property type="entry name" value="Actin-like ATPase domain"/>
    <property type="match status" value="2"/>
</dbReference>
<dbReference type="SUPFAM" id="SSF100934">
    <property type="entry name" value="Heat shock protein 70kD (HSP70), C-terminal subdomain"/>
    <property type="match status" value="1"/>
</dbReference>
<dbReference type="SUPFAM" id="SSF100920">
    <property type="entry name" value="Heat shock protein 70kD (HSP70), peptide-binding domain"/>
    <property type="match status" value="1"/>
</dbReference>
<dbReference type="PROSITE" id="PS00297">
    <property type="entry name" value="HSP70_1"/>
    <property type="match status" value="1"/>
</dbReference>
<dbReference type="PROSITE" id="PS00329">
    <property type="entry name" value="HSP70_2"/>
    <property type="match status" value="1"/>
</dbReference>
<dbReference type="PROSITE" id="PS01036">
    <property type="entry name" value="HSP70_3"/>
    <property type="match status" value="1"/>
</dbReference>
<proteinExistence type="evidence at protein level"/>
<keyword id="KW-0002">3D-structure</keyword>
<keyword id="KW-0067">ATP-binding</keyword>
<keyword id="KW-0143">Chaperone</keyword>
<keyword id="KW-0963">Cytoplasm</keyword>
<keyword id="KW-0547">Nucleotide-binding</keyword>
<keyword id="KW-0597">Phosphoprotein</keyword>
<keyword id="KW-1185">Reference proteome</keyword>
<keyword id="KW-0964">Secreted</keyword>
<keyword id="KW-0346">Stress response</keyword>